<name>NIR_NEOGA</name>
<protein>
    <recommendedName>
        <fullName>Copper-containing nitrite reductase</fullName>
        <ecNumber>1.7.2.1</ecNumber>
    </recommendedName>
    <alternativeName>
        <fullName>Cu-NIR</fullName>
    </alternativeName>
</protein>
<reference key="1">
    <citation type="journal article" date="1993" name="Appl. Environ. Microbiol.">
        <title>Characterization of the structural gene encoding a copper-containing nitrite reductase and homology of this gene to DNA of other denitrifiers.</title>
        <authorList>
            <person name="Ye R.W."/>
            <person name="Fries M.R."/>
            <person name="Bezborodnikov S.G."/>
            <person name="Averill B.A."/>
            <person name="Tiedje J.M."/>
        </authorList>
    </citation>
    <scope>NUCLEOTIDE SEQUENCE [GENOMIC DNA]</scope>
    <source>
        <strain>G-179</strain>
    </source>
</reference>
<sequence>MSEQFRLTRRSMLAGAAVAGALAPVVTSVAHAEGGGIKTNSAATAANIATLERVKVELVKPPFVHAHTQKAEGEPKVVEFKMTIQEKKIVVDDKGTEVHAMTFDGSVPGPMMIVHQDDYVELTLVNPDTNELQHNIDFHSATGALGGGALTVVNPGDTAVLRFKATKAGVFVYHCAPAGMVPWHVTSGMNGAIMVLPRDGLKDHKGHELVYDKVYYVGEQDFYVPKDENGKFKKYESAGEAYPDVLEAMKTLTPTHVVFNGAVGALTGDNALQAKVGDRVLILHSQANRDTRPHLIGGHGDYVWATGKFANPPELDQETWFIPGGAAGAAYYTFQQPGIYAYVNHNLIEAFELGAAGHFKVTGDWNDDLMTAVVSPTSG</sequence>
<keyword id="KW-0186">Copper</keyword>
<keyword id="KW-0274">FAD</keyword>
<keyword id="KW-0285">Flavoprotein</keyword>
<keyword id="KW-0479">Metal-binding</keyword>
<keyword id="KW-0534">Nitrate assimilation</keyword>
<keyword id="KW-0560">Oxidoreductase</keyword>
<keyword id="KW-0574">Periplasm</keyword>
<keyword id="KW-0677">Repeat</keyword>
<keyword id="KW-0732">Signal</keyword>
<dbReference type="EC" id="1.7.2.1"/>
<dbReference type="EMBL" id="M97294">
    <property type="protein sequence ID" value="AAC79132.1"/>
    <property type="molecule type" value="Genomic_DNA"/>
</dbReference>
<dbReference type="PIR" id="A48936">
    <property type="entry name" value="A48936"/>
</dbReference>
<dbReference type="SMR" id="Q01537"/>
<dbReference type="UniPathway" id="UPA00652">
    <property type="reaction ID" value="UER00707"/>
</dbReference>
<dbReference type="GO" id="GO:0042597">
    <property type="term" value="C:periplasmic space"/>
    <property type="evidence" value="ECO:0007669"/>
    <property type="project" value="UniProtKB-SubCell"/>
</dbReference>
<dbReference type="GO" id="GO:0005507">
    <property type="term" value="F:copper ion binding"/>
    <property type="evidence" value="ECO:0007669"/>
    <property type="project" value="InterPro"/>
</dbReference>
<dbReference type="GO" id="GO:0050421">
    <property type="term" value="F:nitrite reductase (NO-forming) activity"/>
    <property type="evidence" value="ECO:0007669"/>
    <property type="project" value="UniProtKB-EC"/>
</dbReference>
<dbReference type="GO" id="GO:0019333">
    <property type="term" value="P:denitrification pathway"/>
    <property type="evidence" value="ECO:0007669"/>
    <property type="project" value="UniProtKB-UniPathway"/>
</dbReference>
<dbReference type="GO" id="GO:0042128">
    <property type="term" value="P:nitrate assimilation"/>
    <property type="evidence" value="ECO:0007669"/>
    <property type="project" value="UniProtKB-KW"/>
</dbReference>
<dbReference type="CDD" id="cd11020">
    <property type="entry name" value="CuRO_1_CuNIR"/>
    <property type="match status" value="1"/>
</dbReference>
<dbReference type="Gene3D" id="2.60.40.420">
    <property type="entry name" value="Cupredoxins - blue copper proteins"/>
    <property type="match status" value="2"/>
</dbReference>
<dbReference type="InterPro" id="IPR011707">
    <property type="entry name" value="Cu-oxidase-like_N"/>
</dbReference>
<dbReference type="InterPro" id="IPR001117">
    <property type="entry name" value="Cu-oxidase_2nd"/>
</dbReference>
<dbReference type="InterPro" id="IPR008972">
    <property type="entry name" value="Cupredoxin"/>
</dbReference>
<dbReference type="InterPro" id="IPR001287">
    <property type="entry name" value="NO2-reductase_Cu"/>
</dbReference>
<dbReference type="InterPro" id="IPR006311">
    <property type="entry name" value="TAT_signal"/>
</dbReference>
<dbReference type="NCBIfam" id="TIGR02376">
    <property type="entry name" value="Cu_nitrite_red"/>
    <property type="match status" value="1"/>
</dbReference>
<dbReference type="Pfam" id="PF00394">
    <property type="entry name" value="Cu-oxidase"/>
    <property type="match status" value="1"/>
</dbReference>
<dbReference type="Pfam" id="PF07732">
    <property type="entry name" value="Cu-oxidase_3"/>
    <property type="match status" value="1"/>
</dbReference>
<dbReference type="PRINTS" id="PR00695">
    <property type="entry name" value="CUNO2RDTASE"/>
</dbReference>
<dbReference type="SUPFAM" id="SSF49503">
    <property type="entry name" value="Cupredoxins"/>
    <property type="match status" value="2"/>
</dbReference>
<dbReference type="PROSITE" id="PS51318">
    <property type="entry name" value="TAT"/>
    <property type="match status" value="1"/>
</dbReference>
<accession>Q01537</accession>
<evidence type="ECO:0000250" key="1"/>
<evidence type="ECO:0000255" key="2">
    <source>
        <dbReference type="PROSITE-ProRule" id="PRU00648"/>
    </source>
</evidence>
<evidence type="ECO:0000305" key="3"/>
<gene>
    <name type="primary">nirU</name>
</gene>
<organism>
    <name type="scientific">Neorhizobium galegae</name>
    <name type="common">Rhizobium galegae</name>
    <dbReference type="NCBI Taxonomy" id="399"/>
    <lineage>
        <taxon>Bacteria</taxon>
        <taxon>Pseudomonadati</taxon>
        <taxon>Pseudomonadota</taxon>
        <taxon>Alphaproteobacteria</taxon>
        <taxon>Hyphomicrobiales</taxon>
        <taxon>Rhizobiaceae</taxon>
        <taxon>Rhizobium/Agrobacterium group</taxon>
        <taxon>Neorhizobium</taxon>
    </lineage>
</organism>
<proteinExistence type="inferred from homology"/>
<comment type="catalytic activity">
    <reaction>
        <text>nitric oxide + Fe(III)-[cytochrome c] + H2O = Fe(II)-[cytochrome c] + nitrite + 2 H(+)</text>
        <dbReference type="Rhea" id="RHEA:15233"/>
        <dbReference type="Rhea" id="RHEA-COMP:10350"/>
        <dbReference type="Rhea" id="RHEA-COMP:14399"/>
        <dbReference type="ChEBI" id="CHEBI:15377"/>
        <dbReference type="ChEBI" id="CHEBI:15378"/>
        <dbReference type="ChEBI" id="CHEBI:16301"/>
        <dbReference type="ChEBI" id="CHEBI:16480"/>
        <dbReference type="ChEBI" id="CHEBI:29033"/>
        <dbReference type="ChEBI" id="CHEBI:29034"/>
        <dbReference type="EC" id="1.7.2.1"/>
    </reaction>
</comment>
<comment type="cofactor">
    <cofactor evidence="1">
        <name>Cu(2+)</name>
        <dbReference type="ChEBI" id="CHEBI:29036"/>
    </cofactor>
    <text evidence="1">Binds 1 Cu(2+) ion. The Cu(2+) ion is held by residues from each of 2 monomers of the trimer. Nitrite is bound to the Cu(2+) ion site. Pseudoazurin is the physiological electron donor for the Cu-NIR in vitro.</text>
</comment>
<comment type="cofactor">
    <cofactor evidence="1">
        <name>Cu(+)</name>
        <dbReference type="ChEBI" id="CHEBI:49552"/>
    </cofactor>
    <text evidence="1">Binds 1 Cu(+) ion. The Cu(+) ion is bound within a single monomer.</text>
</comment>
<comment type="cofactor">
    <cofactor evidence="1">
        <name>FAD</name>
        <dbReference type="ChEBI" id="CHEBI:57692"/>
    </cofactor>
</comment>
<comment type="pathway">
    <text>Nitrogen metabolism; nitrate reduction (denitrification); dinitrogen from nitrate: step 2/4.</text>
</comment>
<comment type="subunit">
    <text evidence="1">Homotrimer.</text>
</comment>
<comment type="subcellular location">
    <subcellularLocation>
        <location>Periplasm</location>
    </subcellularLocation>
</comment>
<comment type="domain">
    <text>The type I copper site in NIR plays a crucial role for electron transfer from pseudoazurin to the type II copper site of NIR, which comprises the catalytic center of NIR for the reduction of nitrite.</text>
</comment>
<comment type="PTM">
    <text>Predicted to be exported by the Tat system. The position of the signal peptide cleavage has not been experimentally proven.</text>
</comment>
<comment type="similarity">
    <text evidence="3">Belongs to the multicopper oxidase family.</text>
</comment>
<comment type="caution">
    <text evidence="3">It is uncertain whether Met-1 or Met-12 is the initiator.</text>
</comment>
<feature type="signal peptide" description="Tat-type signal" evidence="2">
    <location>
        <begin position="1"/>
        <end position="32"/>
    </location>
</feature>
<feature type="chain" id="PRO_0000002989" description="Copper-containing nitrite reductase">
    <location>
        <begin position="33"/>
        <end position="379"/>
    </location>
</feature>
<feature type="domain" description="Plastocyanin-like 1">
    <location>
        <begin position="33"/>
        <end position="214"/>
    </location>
</feature>
<feature type="domain" description="Plastocyanin-like 2">
    <location>
        <begin position="215"/>
        <end position="379"/>
    </location>
</feature>
<feature type="binding site" description="type 1 copper site" evidence="1">
    <location>
        <position position="134"/>
    </location>
    <ligand>
        <name>Cu cation</name>
        <dbReference type="ChEBI" id="CHEBI:23378"/>
        <label>1</label>
    </ligand>
</feature>
<feature type="binding site" description="type 2 copper site" evidence="1">
    <location>
        <position position="139"/>
    </location>
    <ligand>
        <name>Cu cation</name>
        <dbReference type="ChEBI" id="CHEBI:23378"/>
        <label>2</label>
    </ligand>
</feature>
<feature type="binding site" description="type 2 copper site" evidence="1">
    <location>
        <position position="174"/>
    </location>
    <ligand>
        <name>Cu cation</name>
        <dbReference type="ChEBI" id="CHEBI:23378"/>
        <label>2</label>
    </ligand>
</feature>
<feature type="binding site" description="type 1 copper site" evidence="1">
    <location>
        <position position="175"/>
    </location>
    <ligand>
        <name>Cu cation</name>
        <dbReference type="ChEBI" id="CHEBI:23378"/>
        <label>1</label>
    </ligand>
</feature>
<feature type="binding site" description="type 1 copper site" evidence="1">
    <location>
        <position position="184"/>
    </location>
    <ligand>
        <name>Cu cation</name>
        <dbReference type="ChEBI" id="CHEBI:23378"/>
        <label>1</label>
    </ligand>
</feature>
<feature type="binding site" description="type 1 copper site" evidence="1">
    <location>
        <position position="189"/>
    </location>
    <ligand>
        <name>Cu cation</name>
        <dbReference type="ChEBI" id="CHEBI:23378"/>
        <label>1</label>
    </ligand>
</feature>
<feature type="binding site" description="type 2 copper site" evidence="1">
    <location>
        <position position="345"/>
    </location>
    <ligand>
        <name>Cu cation</name>
        <dbReference type="ChEBI" id="CHEBI:23378"/>
        <label>2</label>
    </ligand>
</feature>